<gene>
    <name type="primary">RBM39</name>
</gene>
<reference key="1">
    <citation type="submission" date="2004-11" db="EMBL/GenBank/DDBJ databases">
        <authorList>
            <consortium name="The German cDNA consortium"/>
        </authorList>
    </citation>
    <scope>NUCLEOTIDE SEQUENCE [LARGE SCALE MRNA]</scope>
    <source>
        <tissue>Brain cortex</tissue>
    </source>
</reference>
<keyword id="KW-0007">Acetylation</keyword>
<keyword id="KW-0010">Activator</keyword>
<keyword id="KW-1017">Isopeptide bond</keyword>
<keyword id="KW-0507">mRNA processing</keyword>
<keyword id="KW-0508">mRNA splicing</keyword>
<keyword id="KW-0539">Nucleus</keyword>
<keyword id="KW-0597">Phosphoprotein</keyword>
<keyword id="KW-1185">Reference proteome</keyword>
<keyword id="KW-0677">Repeat</keyword>
<keyword id="KW-0694">RNA-binding</keyword>
<keyword id="KW-0804">Transcription</keyword>
<keyword id="KW-0805">Transcription regulation</keyword>
<keyword id="KW-0832">Ubl conjugation</keyword>
<evidence type="ECO:0000250" key="1"/>
<evidence type="ECO:0000250" key="2">
    <source>
        <dbReference type="UniProtKB" id="Q14498"/>
    </source>
</evidence>
<evidence type="ECO:0000250" key="3">
    <source>
        <dbReference type="UniProtKB" id="Q8VH51"/>
    </source>
</evidence>
<evidence type="ECO:0000255" key="4">
    <source>
        <dbReference type="PROSITE-ProRule" id="PRU00176"/>
    </source>
</evidence>
<evidence type="ECO:0000256" key="5">
    <source>
        <dbReference type="SAM" id="MobiDB-lite"/>
    </source>
</evidence>
<evidence type="ECO:0000305" key="6"/>
<sequence>MADDIDIEAMLEAPYKKDENKLSSANGHEERSKKRKKSKSRSRSHERKRSKSKERKRSRDRERKKSKSRERKRSRSKERRRSRSRSRDRRFRGRYRSPYSGPKFNSAIRGKIGLPHSIKLSRRRSRSKSPFRKDKSPVREPIDNLTPEERDARTVFCMQLAARIRPRDLEEFFSTVGKVRDVRMISDRNSRRSKGIAYVEFVDVSSVPLAIGLTGQRVLGVPIIVQASQAEKNRAAAMANNLQKGSAGPMRLYVGSLHFNITEDMLRGIFEPFGRIESIQLMMDSETGRSKGYGFITFSDSECAKKALEQLNGFELAGRPMKVGHVTERTDASSASSFLDSDELERTGIDLGTTGRLQLMARLAEGTGLQIPPAAQQALQMSGSLAFGAVADLQTRLSQQTEASALAAAASVQPLATQCFQLSNMFNPQTEEEVGWDTEIKDDVIEECNKHGGVIHIYVDKNSAQGNVYVKCPSIAAAIAAVNALHGRWFAGKMITAAYVPLPTYHNLFPDSMTATQLLVPSRR</sequence>
<comment type="function">
    <text evidence="2 3">RNA-binding protein that acts as a pre-mRNA splicing factor. Acts by promoting exon inclusion via regulation of exon cassette splicing (By similarity). Also acts as a transcriptional coactivator for steroid nuclear receptors ESR1/ER-alpha and ESR2/ER-beta, and JUN/AP-1, independently of the pre-mRNA splicing factor activity (By similarity).</text>
</comment>
<comment type="subunit">
    <text evidence="2 3">Interacts with NCOA6 and JUN. Interacts with ESR1 and ESR2, in the presence of estradiol (E2). Interacts with RSRC1 (via Arg/Ser-rich domain). Interacts with SF3B1. Interacts with ZNF106 (via N-terminus).</text>
</comment>
<comment type="subcellular location">
    <subcellularLocation>
        <location>Nucleus speckle</location>
    </subcellularLocation>
    <text evidence="1">Concentrated in nuclear speckles. Colocalizes with the core spliceosomal snRNP proteins (By similarity).</text>
</comment>
<comment type="similarity">
    <text evidence="6">Belongs to the splicing factor SR family.</text>
</comment>
<organism>
    <name type="scientific">Pongo abelii</name>
    <name type="common">Sumatran orangutan</name>
    <name type="synonym">Pongo pygmaeus abelii</name>
    <dbReference type="NCBI Taxonomy" id="9601"/>
    <lineage>
        <taxon>Eukaryota</taxon>
        <taxon>Metazoa</taxon>
        <taxon>Chordata</taxon>
        <taxon>Craniata</taxon>
        <taxon>Vertebrata</taxon>
        <taxon>Euteleostomi</taxon>
        <taxon>Mammalia</taxon>
        <taxon>Eutheria</taxon>
        <taxon>Euarchontoglires</taxon>
        <taxon>Primates</taxon>
        <taxon>Haplorrhini</taxon>
        <taxon>Catarrhini</taxon>
        <taxon>Hominidae</taxon>
        <taxon>Pongo</taxon>
    </lineage>
</organism>
<protein>
    <recommendedName>
        <fullName>RNA-binding protein 39</fullName>
    </recommendedName>
    <alternativeName>
        <fullName>RNA-binding motif protein 39</fullName>
    </alternativeName>
</protein>
<accession>Q5RC80</accession>
<dbReference type="EMBL" id="CR858400">
    <property type="protein sequence ID" value="CAH90627.1"/>
    <property type="molecule type" value="mRNA"/>
</dbReference>
<dbReference type="RefSeq" id="NP_001125339.1">
    <property type="nucleotide sequence ID" value="NM_001131867.1"/>
</dbReference>
<dbReference type="BMRB" id="Q5RC80"/>
<dbReference type="SMR" id="Q5RC80"/>
<dbReference type="STRING" id="9601.ENSPPYP00000012240"/>
<dbReference type="Ensembl" id="ENSPPYT00000012721.3">
    <property type="protein sequence ID" value="ENSPPYP00000012240.3"/>
    <property type="gene ID" value="ENSPPYG00000010963.3"/>
</dbReference>
<dbReference type="GeneID" id="100172241"/>
<dbReference type="KEGG" id="pon:100172241"/>
<dbReference type="CTD" id="9584"/>
<dbReference type="eggNOG" id="KOG0147">
    <property type="taxonomic scope" value="Eukaryota"/>
</dbReference>
<dbReference type="GeneTree" id="ENSGT00940000154468"/>
<dbReference type="HOGENOM" id="CLU_020551_5_1_1"/>
<dbReference type="InParanoid" id="Q5RC80"/>
<dbReference type="OMA" id="GRDNDKG"/>
<dbReference type="OrthoDB" id="8123449at2759"/>
<dbReference type="Proteomes" id="UP000001595">
    <property type="component" value="Chromosome 20"/>
</dbReference>
<dbReference type="GO" id="GO:0034451">
    <property type="term" value="C:centriolar satellite"/>
    <property type="evidence" value="ECO:0007669"/>
    <property type="project" value="Ensembl"/>
</dbReference>
<dbReference type="GO" id="GO:0016607">
    <property type="term" value="C:nuclear speck"/>
    <property type="evidence" value="ECO:0007669"/>
    <property type="project" value="UniProtKB-SubCell"/>
</dbReference>
<dbReference type="GO" id="GO:0032991">
    <property type="term" value="C:protein-containing complex"/>
    <property type="evidence" value="ECO:0007669"/>
    <property type="project" value="Ensembl"/>
</dbReference>
<dbReference type="GO" id="GO:0003723">
    <property type="term" value="F:RNA binding"/>
    <property type="evidence" value="ECO:0007669"/>
    <property type="project" value="UniProtKB-KW"/>
</dbReference>
<dbReference type="GO" id="GO:0050733">
    <property type="term" value="F:RS domain binding"/>
    <property type="evidence" value="ECO:0007669"/>
    <property type="project" value="Ensembl"/>
</dbReference>
<dbReference type="GO" id="GO:0006397">
    <property type="term" value="P:mRNA processing"/>
    <property type="evidence" value="ECO:0007669"/>
    <property type="project" value="UniProtKB-KW"/>
</dbReference>
<dbReference type="GO" id="GO:0048024">
    <property type="term" value="P:regulation of mRNA splicing, via spliceosome"/>
    <property type="evidence" value="ECO:0000250"/>
    <property type="project" value="UniProtKB"/>
</dbReference>
<dbReference type="GO" id="GO:0008380">
    <property type="term" value="P:RNA splicing"/>
    <property type="evidence" value="ECO:0007669"/>
    <property type="project" value="UniProtKB-KW"/>
</dbReference>
<dbReference type="CDD" id="cd12537">
    <property type="entry name" value="RRM1_RBM23"/>
    <property type="match status" value="1"/>
</dbReference>
<dbReference type="CDD" id="cd12284">
    <property type="entry name" value="RRM2_RBM23_RBM39"/>
    <property type="match status" value="1"/>
</dbReference>
<dbReference type="CDD" id="cd12285">
    <property type="entry name" value="RRM3_RBM39_like"/>
    <property type="match status" value="1"/>
</dbReference>
<dbReference type="FunFam" id="3.30.70.330:FF:000080">
    <property type="entry name" value="RNA-binding protein 39 isoform X1"/>
    <property type="match status" value="1"/>
</dbReference>
<dbReference type="FunFam" id="3.30.70.330:FF:000090">
    <property type="entry name" value="RNA-binding protein 39 isoform X1"/>
    <property type="match status" value="1"/>
</dbReference>
<dbReference type="FunFam" id="3.30.70.330:FF:000373">
    <property type="entry name" value="RNA-binding protein 39 isoform X4"/>
    <property type="match status" value="1"/>
</dbReference>
<dbReference type="Gene3D" id="3.30.70.330">
    <property type="match status" value="3"/>
</dbReference>
<dbReference type="InterPro" id="IPR012677">
    <property type="entry name" value="Nucleotide-bd_a/b_plait_sf"/>
</dbReference>
<dbReference type="InterPro" id="IPR035979">
    <property type="entry name" value="RBD_domain_sf"/>
</dbReference>
<dbReference type="InterPro" id="IPR029123">
    <property type="entry name" value="RBM39_linker"/>
</dbReference>
<dbReference type="InterPro" id="IPR006509">
    <property type="entry name" value="RBM39_SF"/>
</dbReference>
<dbReference type="InterPro" id="IPR000504">
    <property type="entry name" value="RRM_dom"/>
</dbReference>
<dbReference type="InterPro" id="IPR003954">
    <property type="entry name" value="RRM_dom_euk"/>
</dbReference>
<dbReference type="NCBIfam" id="TIGR01622">
    <property type="entry name" value="SF-CC1"/>
    <property type="match status" value="1"/>
</dbReference>
<dbReference type="PANTHER" id="PTHR48036">
    <property type="entry name" value="SPLICING FACTOR (PAD-1), PUTATIVE (AFU_ORTHOLOGUE AFUA_1G15810)-RELATED"/>
    <property type="match status" value="1"/>
</dbReference>
<dbReference type="Pfam" id="PF15519">
    <property type="entry name" value="RBM39linker"/>
    <property type="match status" value="1"/>
</dbReference>
<dbReference type="Pfam" id="PF00076">
    <property type="entry name" value="RRM_1"/>
    <property type="match status" value="2"/>
</dbReference>
<dbReference type="SMART" id="SM00360">
    <property type="entry name" value="RRM"/>
    <property type="match status" value="3"/>
</dbReference>
<dbReference type="SMART" id="SM00361">
    <property type="entry name" value="RRM_1"/>
    <property type="match status" value="2"/>
</dbReference>
<dbReference type="SUPFAM" id="SSF54928">
    <property type="entry name" value="RNA-binding domain, RBD"/>
    <property type="match status" value="2"/>
</dbReference>
<dbReference type="PROSITE" id="PS50102">
    <property type="entry name" value="RRM"/>
    <property type="match status" value="2"/>
</dbReference>
<proteinExistence type="evidence at transcript level"/>
<feature type="initiator methionine" description="Removed" evidence="2">
    <location>
        <position position="1"/>
    </location>
</feature>
<feature type="chain" id="PRO_0000268161" description="RNA-binding protein 39">
    <location>
        <begin position="2"/>
        <end position="524"/>
    </location>
</feature>
<feature type="domain" description="RRM 1" evidence="4">
    <location>
        <begin position="153"/>
        <end position="230"/>
    </location>
</feature>
<feature type="domain" description="RRM 2" evidence="4">
    <location>
        <begin position="250"/>
        <end position="328"/>
    </location>
</feature>
<feature type="domain" description="RRM 3" evidence="4">
    <location>
        <begin position="439"/>
        <end position="502"/>
    </location>
</feature>
<feature type="region of interest" description="Disordered" evidence="5">
    <location>
        <begin position="1"/>
        <end position="146"/>
    </location>
</feature>
<feature type="region of interest" description="Interaction with JUN" evidence="3">
    <location>
        <begin position="291"/>
        <end position="400"/>
    </location>
</feature>
<feature type="region of interest" description="Activating domain" evidence="3">
    <location>
        <begin position="291"/>
        <end position="355"/>
    </location>
</feature>
<feature type="region of interest" description="Interaction with ESR1 and ESR2" evidence="3">
    <location>
        <begin position="355"/>
        <end position="400"/>
    </location>
</feature>
<feature type="region of interest" description="Interaction with NCOA6" evidence="3">
    <location>
        <begin position="400"/>
        <end position="524"/>
    </location>
</feature>
<feature type="compositionally biased region" description="Basic and acidic residues" evidence="5">
    <location>
        <begin position="14"/>
        <end position="32"/>
    </location>
</feature>
<feature type="compositionally biased region" description="Basic residues" evidence="5">
    <location>
        <begin position="33"/>
        <end position="56"/>
    </location>
</feature>
<feature type="compositionally biased region" description="Basic residues" evidence="5">
    <location>
        <begin position="64"/>
        <end position="95"/>
    </location>
</feature>
<feature type="compositionally biased region" description="Basic residues" evidence="5">
    <location>
        <begin position="119"/>
        <end position="130"/>
    </location>
</feature>
<feature type="compositionally biased region" description="Basic and acidic residues" evidence="5">
    <location>
        <begin position="131"/>
        <end position="146"/>
    </location>
</feature>
<feature type="modified residue" description="N-acetylalanine" evidence="2">
    <location>
        <position position="2"/>
    </location>
</feature>
<feature type="modified residue" description="Phosphotyrosine" evidence="2">
    <location>
        <position position="95"/>
    </location>
</feature>
<feature type="modified residue" description="Phosphoserine" evidence="2">
    <location>
        <position position="97"/>
    </location>
</feature>
<feature type="modified residue" description="Phosphoserine" evidence="2">
    <location>
        <position position="100"/>
    </location>
</feature>
<feature type="modified residue" description="Phosphoserine" evidence="2">
    <location>
        <position position="117"/>
    </location>
</feature>
<feature type="modified residue" description="Phosphoserine" evidence="2">
    <location>
        <position position="121"/>
    </location>
</feature>
<feature type="modified residue" description="Phosphoserine" evidence="2">
    <location>
        <position position="136"/>
    </location>
</feature>
<feature type="modified residue" description="Phosphothreonine" evidence="2">
    <location>
        <position position="146"/>
    </location>
</feature>
<feature type="modified residue" description="Phosphoserine" evidence="2">
    <location>
        <position position="334"/>
    </location>
</feature>
<feature type="modified residue" description="Phosphoserine" evidence="2">
    <location>
        <position position="337"/>
    </location>
</feature>
<feature type="modified residue" description="Phosphoserine" evidence="2">
    <location>
        <position position="341"/>
    </location>
</feature>
<feature type="cross-link" description="Glycyl lysine isopeptide (Lys-Gly) (interchain with G-Cter in SUMO2)" evidence="2">
    <location>
        <position position="111"/>
    </location>
</feature>
<feature type="cross-link" description="Glycyl lysine isopeptide (Lys-Gly) (interchain with G-Cter in SUMO2)" evidence="2">
    <location>
        <position position="119"/>
    </location>
</feature>
<feature type="cross-link" description="Glycyl lysine isopeptide (Lys-Gly) (interchain with G-Cter in SUMO2)" evidence="2">
    <location>
        <position position="244"/>
    </location>
</feature>
<name>RBM39_PONAB</name>